<name>MQO_NEIG2</name>
<gene>
    <name evidence="1" type="primary">mqo</name>
    <name type="ordered locus">NGK_2261</name>
</gene>
<keyword id="KW-0274">FAD</keyword>
<keyword id="KW-0285">Flavoprotein</keyword>
<keyword id="KW-0560">Oxidoreductase</keyword>
<keyword id="KW-0816">Tricarboxylic acid cycle</keyword>
<proteinExistence type="inferred from homology"/>
<reference key="1">
    <citation type="journal article" date="2008" name="J. Bacteriol.">
        <title>Complete genome sequence of Neisseria gonorrhoeae NCCP11945.</title>
        <authorList>
            <person name="Chung G.T."/>
            <person name="Yoo J.S."/>
            <person name="Oh H.B."/>
            <person name="Lee Y.S."/>
            <person name="Cha S.H."/>
            <person name="Kim S.J."/>
            <person name="Yoo C.K."/>
        </authorList>
    </citation>
    <scope>NUCLEOTIDE SEQUENCE [LARGE SCALE GENOMIC DNA]</scope>
    <source>
        <strain>NCCP11945</strain>
    </source>
</reference>
<comment type="catalytic activity">
    <reaction evidence="1">
        <text>(S)-malate + a quinone = a quinol + oxaloacetate</text>
        <dbReference type="Rhea" id="RHEA:46012"/>
        <dbReference type="ChEBI" id="CHEBI:15589"/>
        <dbReference type="ChEBI" id="CHEBI:16452"/>
        <dbReference type="ChEBI" id="CHEBI:24646"/>
        <dbReference type="ChEBI" id="CHEBI:132124"/>
        <dbReference type="EC" id="1.1.5.4"/>
    </reaction>
</comment>
<comment type="cofactor">
    <cofactor evidence="1">
        <name>FAD</name>
        <dbReference type="ChEBI" id="CHEBI:57692"/>
    </cofactor>
</comment>
<comment type="pathway">
    <text evidence="1">Carbohydrate metabolism; tricarboxylic acid cycle; oxaloacetate from (S)-malate (quinone route): step 1/1.</text>
</comment>
<comment type="similarity">
    <text evidence="1">Belongs to the MQO family.</text>
</comment>
<dbReference type="EC" id="1.1.5.4" evidence="1"/>
<dbReference type="EMBL" id="CP001050">
    <property type="protein sequence ID" value="ACF30865.1"/>
    <property type="molecule type" value="Genomic_DNA"/>
</dbReference>
<dbReference type="RefSeq" id="WP_003686866.1">
    <property type="nucleotide sequence ID" value="NC_011035.1"/>
</dbReference>
<dbReference type="SMR" id="B4RQQ5"/>
<dbReference type="KEGG" id="ngk:NGK_2261"/>
<dbReference type="HOGENOM" id="CLU_028151_0_0_4"/>
<dbReference type="UniPathway" id="UPA00223">
    <property type="reaction ID" value="UER01008"/>
</dbReference>
<dbReference type="Proteomes" id="UP000002564">
    <property type="component" value="Chromosome"/>
</dbReference>
<dbReference type="GO" id="GO:0047545">
    <property type="term" value="F:2-hydroxyglutarate dehydrogenase activity"/>
    <property type="evidence" value="ECO:0007669"/>
    <property type="project" value="TreeGrafter"/>
</dbReference>
<dbReference type="GO" id="GO:0008924">
    <property type="term" value="F:L-malate dehydrogenase (quinone) activity"/>
    <property type="evidence" value="ECO:0007669"/>
    <property type="project" value="UniProtKB-UniRule"/>
</dbReference>
<dbReference type="GO" id="GO:0006099">
    <property type="term" value="P:tricarboxylic acid cycle"/>
    <property type="evidence" value="ECO:0007669"/>
    <property type="project" value="UniProtKB-UniRule"/>
</dbReference>
<dbReference type="Gene3D" id="3.30.9.10">
    <property type="entry name" value="D-Amino Acid Oxidase, subunit A, domain 2"/>
    <property type="match status" value="1"/>
</dbReference>
<dbReference type="Gene3D" id="3.50.50.60">
    <property type="entry name" value="FAD/NAD(P)-binding domain"/>
    <property type="match status" value="1"/>
</dbReference>
<dbReference type="HAMAP" id="MF_00212">
    <property type="entry name" value="MQO"/>
    <property type="match status" value="1"/>
</dbReference>
<dbReference type="InterPro" id="IPR036188">
    <property type="entry name" value="FAD/NAD-bd_sf"/>
</dbReference>
<dbReference type="InterPro" id="IPR006231">
    <property type="entry name" value="MQO"/>
</dbReference>
<dbReference type="NCBIfam" id="TIGR01320">
    <property type="entry name" value="mal_quin_oxido"/>
    <property type="match status" value="1"/>
</dbReference>
<dbReference type="NCBIfam" id="NF003603">
    <property type="entry name" value="PRK05257.1-1"/>
    <property type="match status" value="1"/>
</dbReference>
<dbReference type="NCBIfam" id="NF003605">
    <property type="entry name" value="PRK05257.1-4"/>
    <property type="match status" value="1"/>
</dbReference>
<dbReference type="NCBIfam" id="NF003606">
    <property type="entry name" value="PRK05257.2-1"/>
    <property type="match status" value="1"/>
</dbReference>
<dbReference type="NCBIfam" id="NF003609">
    <property type="entry name" value="PRK05257.2-5"/>
    <property type="match status" value="1"/>
</dbReference>
<dbReference type="NCBIfam" id="NF003610">
    <property type="entry name" value="PRK05257.3-1"/>
    <property type="match status" value="1"/>
</dbReference>
<dbReference type="NCBIfam" id="NF003611">
    <property type="entry name" value="PRK05257.3-2"/>
    <property type="match status" value="1"/>
</dbReference>
<dbReference type="NCBIfam" id="NF009875">
    <property type="entry name" value="PRK13339.1"/>
    <property type="match status" value="1"/>
</dbReference>
<dbReference type="PANTHER" id="PTHR43104">
    <property type="entry name" value="L-2-HYDROXYGLUTARATE DEHYDROGENASE, MITOCHONDRIAL"/>
    <property type="match status" value="1"/>
</dbReference>
<dbReference type="PANTHER" id="PTHR43104:SF2">
    <property type="entry name" value="L-2-HYDROXYGLUTARATE DEHYDROGENASE, MITOCHONDRIAL"/>
    <property type="match status" value="1"/>
</dbReference>
<dbReference type="Pfam" id="PF06039">
    <property type="entry name" value="Mqo"/>
    <property type="match status" value="1"/>
</dbReference>
<dbReference type="SUPFAM" id="SSF51905">
    <property type="entry name" value="FAD/NAD(P)-binding domain"/>
    <property type="match status" value="1"/>
</dbReference>
<organism>
    <name type="scientific">Neisseria gonorrhoeae (strain NCCP11945)</name>
    <dbReference type="NCBI Taxonomy" id="521006"/>
    <lineage>
        <taxon>Bacteria</taxon>
        <taxon>Pseudomonadati</taxon>
        <taxon>Pseudomonadota</taxon>
        <taxon>Betaproteobacteria</taxon>
        <taxon>Neisseriales</taxon>
        <taxon>Neisseriaceae</taxon>
        <taxon>Neisseria</taxon>
    </lineage>
</organism>
<feature type="chain" id="PRO_1000099877" description="Probable malate:quinone oxidoreductase">
    <location>
        <begin position="1"/>
        <end position="488"/>
    </location>
</feature>
<protein>
    <recommendedName>
        <fullName evidence="1">Probable malate:quinone oxidoreductase</fullName>
        <ecNumber evidence="1">1.1.5.4</ecNumber>
    </recommendedName>
    <alternativeName>
        <fullName evidence="1">MQO</fullName>
    </alternativeName>
    <alternativeName>
        <fullName evidence="1">Malate dehydrogenase [quinone]</fullName>
    </alternativeName>
</protein>
<evidence type="ECO:0000255" key="1">
    <source>
        <dbReference type="HAMAP-Rule" id="MF_00212"/>
    </source>
</evidence>
<accession>B4RQQ5</accession>
<sequence>MAEATDVVLVGGGIMSATLGVLLKELEPSWEITLIERLEDVALESSNAWNNAGTGHSALCELNYAPLGADGVINPARALNIAEQFHVSRQFWATLVAEGKLEDNSFINAVPHMSLVMNEDHCRYLQKRYDVFKTQKLFENMEFSTDRNKISDWAPLIMRGRDENQPVAANYSAEGTDVDFGRLTRQMVKYLQGKGVKTEFNRHVEDIKRESDGAWVLKTADTRNPDWQLTLRTRFLFLGAGGGALTLLQKSGIPEGKGYGGLPVSGLFFRNSNPETAEQHNAKVYGQASVGAPPMSVPHLDTRNVDGKRHLMFGPYAGFRSNFLKQGSFMDLPLSIHMDNLYPMLRAGWANMPLTKYLLGELRKTKEERFASLLEYYPEANPDDWELITAGQRVQIIKKDSEKGGVLQFGTEIVAHADGSLAALLGASPGASTAVPLMIRLMHQCFPERAPSWEGRLKELVPGYGIKLNENPERADEIIAYTAKVLDI</sequence>